<proteinExistence type="inferred from homology"/>
<comment type="function">
    <text evidence="1">Activates KDO (a required 8-carbon sugar) for incorporation into bacterial lipopolysaccharide in Gram-negative bacteria.</text>
</comment>
<comment type="catalytic activity">
    <reaction evidence="1">
        <text>3-deoxy-alpha-D-manno-oct-2-ulosonate + CTP = CMP-3-deoxy-beta-D-manno-octulosonate + diphosphate</text>
        <dbReference type="Rhea" id="RHEA:23448"/>
        <dbReference type="ChEBI" id="CHEBI:33019"/>
        <dbReference type="ChEBI" id="CHEBI:37563"/>
        <dbReference type="ChEBI" id="CHEBI:85986"/>
        <dbReference type="ChEBI" id="CHEBI:85987"/>
        <dbReference type="EC" id="2.7.7.38"/>
    </reaction>
</comment>
<comment type="pathway">
    <text evidence="1">Nucleotide-sugar biosynthesis; CMP-3-deoxy-D-manno-octulosonate biosynthesis; CMP-3-deoxy-D-manno-octulosonate from 3-deoxy-D-manno-octulosonate and CTP: step 1/1.</text>
</comment>
<comment type="pathway">
    <text evidence="1">Bacterial outer membrane biogenesis; lipopolysaccharide biosynthesis.</text>
</comment>
<comment type="subcellular location">
    <subcellularLocation>
        <location evidence="1">Cytoplasm</location>
    </subcellularLocation>
</comment>
<comment type="similarity">
    <text evidence="1">Belongs to the KdsB family.</text>
</comment>
<organism>
    <name type="scientific">Citrobacter koseri (strain ATCC BAA-895 / CDC 4225-83 / SGSC4696)</name>
    <dbReference type="NCBI Taxonomy" id="290338"/>
    <lineage>
        <taxon>Bacteria</taxon>
        <taxon>Pseudomonadati</taxon>
        <taxon>Pseudomonadota</taxon>
        <taxon>Gammaproteobacteria</taxon>
        <taxon>Enterobacterales</taxon>
        <taxon>Enterobacteriaceae</taxon>
        <taxon>Citrobacter</taxon>
    </lineage>
</organism>
<dbReference type="EC" id="2.7.7.38" evidence="1"/>
<dbReference type="EMBL" id="CP000822">
    <property type="protein sequence ID" value="ABV13276.1"/>
    <property type="molecule type" value="Genomic_DNA"/>
</dbReference>
<dbReference type="RefSeq" id="WP_012133008.1">
    <property type="nucleotide sequence ID" value="NC_009792.1"/>
</dbReference>
<dbReference type="SMR" id="A8AIG3"/>
<dbReference type="STRING" id="290338.CKO_02152"/>
<dbReference type="GeneID" id="45136091"/>
<dbReference type="KEGG" id="cko:CKO_02152"/>
<dbReference type="HOGENOM" id="CLU_065038_1_0_6"/>
<dbReference type="OrthoDB" id="9815559at2"/>
<dbReference type="UniPathway" id="UPA00030"/>
<dbReference type="UniPathway" id="UPA00358">
    <property type="reaction ID" value="UER00476"/>
</dbReference>
<dbReference type="Proteomes" id="UP000008148">
    <property type="component" value="Chromosome"/>
</dbReference>
<dbReference type="GO" id="GO:0005829">
    <property type="term" value="C:cytosol"/>
    <property type="evidence" value="ECO:0007669"/>
    <property type="project" value="TreeGrafter"/>
</dbReference>
<dbReference type="GO" id="GO:0008690">
    <property type="term" value="F:3-deoxy-manno-octulosonate cytidylyltransferase activity"/>
    <property type="evidence" value="ECO:0007669"/>
    <property type="project" value="UniProtKB-UniRule"/>
</dbReference>
<dbReference type="GO" id="GO:0033468">
    <property type="term" value="P:CMP-keto-3-deoxy-D-manno-octulosonic acid biosynthetic process"/>
    <property type="evidence" value="ECO:0007669"/>
    <property type="project" value="UniProtKB-UniRule"/>
</dbReference>
<dbReference type="GO" id="GO:0009103">
    <property type="term" value="P:lipopolysaccharide biosynthetic process"/>
    <property type="evidence" value="ECO:0007669"/>
    <property type="project" value="UniProtKB-UniRule"/>
</dbReference>
<dbReference type="CDD" id="cd02517">
    <property type="entry name" value="CMP-KDO-Synthetase"/>
    <property type="match status" value="1"/>
</dbReference>
<dbReference type="FunFam" id="3.90.550.10:FF:000011">
    <property type="entry name" value="3-deoxy-manno-octulosonate cytidylyltransferase"/>
    <property type="match status" value="1"/>
</dbReference>
<dbReference type="Gene3D" id="3.90.550.10">
    <property type="entry name" value="Spore Coat Polysaccharide Biosynthesis Protein SpsA, Chain A"/>
    <property type="match status" value="1"/>
</dbReference>
<dbReference type="HAMAP" id="MF_00057">
    <property type="entry name" value="KdsB"/>
    <property type="match status" value="1"/>
</dbReference>
<dbReference type="InterPro" id="IPR003329">
    <property type="entry name" value="Cytidylyl_trans"/>
</dbReference>
<dbReference type="InterPro" id="IPR004528">
    <property type="entry name" value="KdsB"/>
</dbReference>
<dbReference type="InterPro" id="IPR029044">
    <property type="entry name" value="Nucleotide-diphossugar_trans"/>
</dbReference>
<dbReference type="NCBIfam" id="TIGR00466">
    <property type="entry name" value="kdsB"/>
    <property type="match status" value="1"/>
</dbReference>
<dbReference type="NCBIfam" id="NF003950">
    <property type="entry name" value="PRK05450.1-3"/>
    <property type="match status" value="1"/>
</dbReference>
<dbReference type="NCBIfam" id="NF003952">
    <property type="entry name" value="PRK05450.1-5"/>
    <property type="match status" value="1"/>
</dbReference>
<dbReference type="NCBIfam" id="NF009905">
    <property type="entry name" value="PRK13368.1"/>
    <property type="match status" value="1"/>
</dbReference>
<dbReference type="PANTHER" id="PTHR42866">
    <property type="entry name" value="3-DEOXY-MANNO-OCTULOSONATE CYTIDYLYLTRANSFERASE"/>
    <property type="match status" value="1"/>
</dbReference>
<dbReference type="PANTHER" id="PTHR42866:SF2">
    <property type="entry name" value="3-DEOXY-MANNO-OCTULOSONATE CYTIDYLYLTRANSFERASE, MITOCHONDRIAL"/>
    <property type="match status" value="1"/>
</dbReference>
<dbReference type="Pfam" id="PF02348">
    <property type="entry name" value="CTP_transf_3"/>
    <property type="match status" value="1"/>
</dbReference>
<dbReference type="SUPFAM" id="SSF53448">
    <property type="entry name" value="Nucleotide-diphospho-sugar transferases"/>
    <property type="match status" value="1"/>
</dbReference>
<protein>
    <recommendedName>
        <fullName evidence="1">3-deoxy-manno-octulosonate cytidylyltransferase</fullName>
        <ecNumber evidence="1">2.7.7.38</ecNumber>
    </recommendedName>
    <alternativeName>
        <fullName evidence="1">CMP-2-keto-3-deoxyoctulosonic acid synthase</fullName>
        <shortName evidence="1">CKS</shortName>
        <shortName evidence="1">CMP-KDO synthase</shortName>
    </alternativeName>
</protein>
<accession>A8AIG3</accession>
<name>KDSB_CITK8</name>
<reference key="1">
    <citation type="submission" date="2007-08" db="EMBL/GenBank/DDBJ databases">
        <authorList>
            <consortium name="The Citrobacter koseri Genome Sequencing Project"/>
            <person name="McClelland M."/>
            <person name="Sanderson E.K."/>
            <person name="Porwollik S."/>
            <person name="Spieth J."/>
            <person name="Clifton W.S."/>
            <person name="Latreille P."/>
            <person name="Courtney L."/>
            <person name="Wang C."/>
            <person name="Pepin K."/>
            <person name="Bhonagiri V."/>
            <person name="Nash W."/>
            <person name="Johnson M."/>
            <person name="Thiruvilangam P."/>
            <person name="Wilson R."/>
        </authorList>
    </citation>
    <scope>NUCLEOTIDE SEQUENCE [LARGE SCALE GENOMIC DNA]</scope>
    <source>
        <strain>ATCC BAA-895 / CDC 4225-83 / SGSC4696</strain>
    </source>
</reference>
<sequence length="248" mass="27531">MSFVVIIPARFSSTRLPGKPLLDINGKPMIVHVLERARESGAERIIVATDHEDVARAVEAAGGEVCMTRADHQSGTERLAEVVEKCGFSDDTVIVNVQGDEPMIPAVIIRQVAENLAQRQVGMATLAAPIHGAEEAFNPNAVKVVLDAEGYALYFSRATIPWDRDRFAKSLETVGDTFLRHLGIYGYRAGFIRRYVNWQPSPLEHIEMLEQLRVLWYGEKIHVAVAKEVPGTGVDTAEDLERVRAEMR</sequence>
<evidence type="ECO:0000255" key="1">
    <source>
        <dbReference type="HAMAP-Rule" id="MF_00057"/>
    </source>
</evidence>
<feature type="chain" id="PRO_1000003356" description="3-deoxy-manno-octulosonate cytidylyltransferase">
    <location>
        <begin position="1"/>
        <end position="248"/>
    </location>
</feature>
<gene>
    <name evidence="1" type="primary">kdsB</name>
    <name type="ordered locus">CKO_02152</name>
</gene>
<keyword id="KW-0963">Cytoplasm</keyword>
<keyword id="KW-0448">Lipopolysaccharide biosynthesis</keyword>
<keyword id="KW-0548">Nucleotidyltransferase</keyword>
<keyword id="KW-1185">Reference proteome</keyword>
<keyword id="KW-0808">Transferase</keyword>